<evidence type="ECO:0000250" key="1"/>
<evidence type="ECO:0000255" key="2">
    <source>
        <dbReference type="PROSITE-ProRule" id="PRU00326"/>
    </source>
</evidence>
<evidence type="ECO:0000255" key="3">
    <source>
        <dbReference type="PROSITE-ProRule" id="PRU01081"/>
    </source>
</evidence>
<evidence type="ECO:0000256" key="4">
    <source>
        <dbReference type="SAM" id="MobiDB-lite"/>
    </source>
</evidence>
<evidence type="ECO:0000269" key="5">
    <source>
    </source>
</evidence>
<evidence type="ECO:0000305" key="6"/>
<reference key="1">
    <citation type="journal article" date="2002" name="Nature">
        <title>Sequence and analysis of rice chromosome 4.</title>
        <authorList>
            <person name="Feng Q."/>
            <person name="Zhang Y."/>
            <person name="Hao P."/>
            <person name="Wang S."/>
            <person name="Fu G."/>
            <person name="Huang Y."/>
            <person name="Li Y."/>
            <person name="Zhu J."/>
            <person name="Liu Y."/>
            <person name="Hu X."/>
            <person name="Jia P."/>
            <person name="Zhang Y."/>
            <person name="Zhao Q."/>
            <person name="Ying K."/>
            <person name="Yu S."/>
            <person name="Tang Y."/>
            <person name="Weng Q."/>
            <person name="Zhang L."/>
            <person name="Lu Y."/>
            <person name="Mu J."/>
            <person name="Lu Y."/>
            <person name="Zhang L.S."/>
            <person name="Yu Z."/>
            <person name="Fan D."/>
            <person name="Liu X."/>
            <person name="Lu T."/>
            <person name="Li C."/>
            <person name="Wu Y."/>
            <person name="Sun T."/>
            <person name="Lei H."/>
            <person name="Li T."/>
            <person name="Hu H."/>
            <person name="Guan J."/>
            <person name="Wu M."/>
            <person name="Zhang R."/>
            <person name="Zhou B."/>
            <person name="Chen Z."/>
            <person name="Chen L."/>
            <person name="Jin Z."/>
            <person name="Wang R."/>
            <person name="Yin H."/>
            <person name="Cai Z."/>
            <person name="Ren S."/>
            <person name="Lv G."/>
            <person name="Gu W."/>
            <person name="Zhu G."/>
            <person name="Tu Y."/>
            <person name="Jia J."/>
            <person name="Zhang Y."/>
            <person name="Chen J."/>
            <person name="Kang H."/>
            <person name="Chen X."/>
            <person name="Shao C."/>
            <person name="Sun Y."/>
            <person name="Hu Q."/>
            <person name="Zhang X."/>
            <person name="Zhang W."/>
            <person name="Wang L."/>
            <person name="Ding C."/>
            <person name="Sheng H."/>
            <person name="Gu J."/>
            <person name="Chen S."/>
            <person name="Ni L."/>
            <person name="Zhu F."/>
            <person name="Chen W."/>
            <person name="Lan L."/>
            <person name="Lai Y."/>
            <person name="Cheng Z."/>
            <person name="Gu M."/>
            <person name="Jiang J."/>
            <person name="Li J."/>
            <person name="Hong G."/>
            <person name="Xue Y."/>
            <person name="Han B."/>
        </authorList>
    </citation>
    <scope>NUCLEOTIDE SEQUENCE [LARGE SCALE GENOMIC DNA]</scope>
    <source>
        <strain>cv. Nipponbare</strain>
    </source>
</reference>
<reference key="2">
    <citation type="journal article" date="2005" name="Nature">
        <title>The map-based sequence of the rice genome.</title>
        <authorList>
            <consortium name="International rice genome sequencing project (IRGSP)"/>
        </authorList>
    </citation>
    <scope>NUCLEOTIDE SEQUENCE [LARGE SCALE GENOMIC DNA]</scope>
    <source>
        <strain>cv. Nipponbare</strain>
    </source>
</reference>
<reference key="3">
    <citation type="journal article" date="2008" name="Nucleic Acids Res.">
        <title>The rice annotation project database (RAP-DB): 2008 update.</title>
        <authorList>
            <consortium name="The rice annotation project (RAP)"/>
        </authorList>
    </citation>
    <scope>GENOME REANNOTATION</scope>
    <source>
        <strain>cv. Nipponbare</strain>
    </source>
</reference>
<reference key="4">
    <citation type="journal article" date="2013" name="Rice">
        <title>Improvement of the Oryza sativa Nipponbare reference genome using next generation sequence and optical map data.</title>
        <authorList>
            <person name="Kawahara Y."/>
            <person name="de la Bastide M."/>
            <person name="Hamilton J.P."/>
            <person name="Kanamori H."/>
            <person name="McCombie W.R."/>
            <person name="Ouyang S."/>
            <person name="Schwartz D.C."/>
            <person name="Tanaka T."/>
            <person name="Wu J."/>
            <person name="Zhou S."/>
            <person name="Childs K.L."/>
            <person name="Davidson R.M."/>
            <person name="Lin H."/>
            <person name="Quesada-Ocampo L."/>
            <person name="Vaillancourt B."/>
            <person name="Sakai H."/>
            <person name="Lee S.S."/>
            <person name="Kim J."/>
            <person name="Numa H."/>
            <person name="Itoh T."/>
            <person name="Buell C.R."/>
            <person name="Matsumoto T."/>
        </authorList>
    </citation>
    <scope>GENOME REANNOTATION</scope>
    <source>
        <strain>cv. Nipponbare</strain>
    </source>
</reference>
<reference key="5">
    <citation type="journal article" date="2005" name="PLoS Biol.">
        <title>The genomes of Oryza sativa: a history of duplications.</title>
        <authorList>
            <person name="Yu J."/>
            <person name="Wang J."/>
            <person name="Lin W."/>
            <person name="Li S."/>
            <person name="Li H."/>
            <person name="Zhou J."/>
            <person name="Ni P."/>
            <person name="Dong W."/>
            <person name="Hu S."/>
            <person name="Zeng C."/>
            <person name="Zhang J."/>
            <person name="Zhang Y."/>
            <person name="Li R."/>
            <person name="Xu Z."/>
            <person name="Li S."/>
            <person name="Li X."/>
            <person name="Zheng H."/>
            <person name="Cong L."/>
            <person name="Lin L."/>
            <person name="Yin J."/>
            <person name="Geng J."/>
            <person name="Li G."/>
            <person name="Shi J."/>
            <person name="Liu J."/>
            <person name="Lv H."/>
            <person name="Li J."/>
            <person name="Wang J."/>
            <person name="Deng Y."/>
            <person name="Ran L."/>
            <person name="Shi X."/>
            <person name="Wang X."/>
            <person name="Wu Q."/>
            <person name="Li C."/>
            <person name="Ren X."/>
            <person name="Wang J."/>
            <person name="Wang X."/>
            <person name="Li D."/>
            <person name="Liu D."/>
            <person name="Zhang X."/>
            <person name="Ji Z."/>
            <person name="Zhao W."/>
            <person name="Sun Y."/>
            <person name="Zhang Z."/>
            <person name="Bao J."/>
            <person name="Han Y."/>
            <person name="Dong L."/>
            <person name="Ji J."/>
            <person name="Chen P."/>
            <person name="Wu S."/>
            <person name="Liu J."/>
            <person name="Xiao Y."/>
            <person name="Bu D."/>
            <person name="Tan J."/>
            <person name="Yang L."/>
            <person name="Ye C."/>
            <person name="Zhang J."/>
            <person name="Xu J."/>
            <person name="Zhou Y."/>
            <person name="Yu Y."/>
            <person name="Zhang B."/>
            <person name="Zhuang S."/>
            <person name="Wei H."/>
            <person name="Liu B."/>
            <person name="Lei M."/>
            <person name="Yu H."/>
            <person name="Li Y."/>
            <person name="Xu H."/>
            <person name="Wei S."/>
            <person name="He X."/>
            <person name="Fang L."/>
            <person name="Zhang Z."/>
            <person name="Zhang Y."/>
            <person name="Huang X."/>
            <person name="Su Z."/>
            <person name="Tong W."/>
            <person name="Li J."/>
            <person name="Tong Z."/>
            <person name="Li S."/>
            <person name="Ye J."/>
            <person name="Wang L."/>
            <person name="Fang L."/>
            <person name="Lei T."/>
            <person name="Chen C.-S."/>
            <person name="Chen H.-C."/>
            <person name="Xu Z."/>
            <person name="Li H."/>
            <person name="Huang H."/>
            <person name="Zhang F."/>
            <person name="Xu H."/>
            <person name="Li N."/>
            <person name="Zhao C."/>
            <person name="Li S."/>
            <person name="Dong L."/>
            <person name="Huang Y."/>
            <person name="Li L."/>
            <person name="Xi Y."/>
            <person name="Qi Q."/>
            <person name="Li W."/>
            <person name="Zhang B."/>
            <person name="Hu W."/>
            <person name="Zhang Y."/>
            <person name="Tian X."/>
            <person name="Jiao Y."/>
            <person name="Liang X."/>
            <person name="Jin J."/>
            <person name="Gao L."/>
            <person name="Zheng W."/>
            <person name="Hao B."/>
            <person name="Liu S.-M."/>
            <person name="Wang W."/>
            <person name="Yuan L."/>
            <person name="Cao M."/>
            <person name="McDermott J."/>
            <person name="Samudrala R."/>
            <person name="Wang J."/>
            <person name="Wong G.K.-S."/>
            <person name="Yang H."/>
        </authorList>
    </citation>
    <scope>NUCLEOTIDE SEQUENCE [LARGE SCALE GENOMIC DNA]</scope>
    <source>
        <strain>cv. Nipponbare</strain>
    </source>
</reference>
<reference key="6">
    <citation type="journal article" date="2007" name="Gene">
        <title>Genome-wide analysis of the auxin response factors (ARF) gene family in rice (Oryza sativa).</title>
        <authorList>
            <person name="Wang D."/>
            <person name="Pei K."/>
            <person name="Fu Y."/>
            <person name="Sun Z."/>
            <person name="Li S."/>
            <person name="Liu H."/>
            <person name="Tang K."/>
            <person name="Han B."/>
            <person name="Tao Y."/>
        </authorList>
    </citation>
    <scope>GENE FAMILY</scope>
    <scope>TISSUE SPECIFICITY</scope>
    <scope>NOMENCLATURE</scope>
</reference>
<comment type="function">
    <text>Auxin response factors (ARFs) are transcriptional factors that bind specifically to the DNA sequence 5'-TGTCTC-3' found in the auxin-responsive promoter elements (AuxREs).</text>
</comment>
<comment type="subunit">
    <text evidence="1">Homodimers and heterodimers.</text>
</comment>
<comment type="subcellular location">
    <subcellularLocation>
        <location evidence="2">Nucleus</location>
    </subcellularLocation>
</comment>
<comment type="tissue specificity">
    <text evidence="5">Expressed in roots, culms, leaves and young panicles.</text>
</comment>
<comment type="domain">
    <text>Interactions between auxin response factors (ARFs) and Aux/IAA proteins occur through their C-terminal dimerization domains III and IV.</text>
</comment>
<comment type="similarity">
    <text evidence="6">Belongs to the ARF family.</text>
</comment>
<comment type="sequence caution" evidence="6">
    <conflict type="erroneous gene model prediction">
        <sequence resource="EMBL-CDS" id="BAF15244"/>
    </conflict>
</comment>
<comment type="sequence caution" evidence="6">
    <conflict type="erroneous initiation">
        <sequence resource="EMBL-CDS" id="CAD41455"/>
    </conflict>
</comment>
<comment type="sequence caution" evidence="6">
    <conflict type="erroneous initiation">
        <sequence resource="EMBL-CDS" id="CAE05633"/>
    </conflict>
</comment>
<comment type="sequence caution" evidence="6">
    <conflict type="frameshift">
        <sequence resource="EMBL" id="CM000141"/>
    </conflict>
</comment>
<keyword id="KW-0927">Auxin signaling pathway</keyword>
<keyword id="KW-0238">DNA-binding</keyword>
<keyword id="KW-0539">Nucleus</keyword>
<keyword id="KW-1185">Reference proteome</keyword>
<keyword id="KW-0804">Transcription</keyword>
<keyword id="KW-0805">Transcription regulation</keyword>
<gene>
    <name type="primary">ARF10</name>
    <name type="ordered locus">Os04g0519700</name>
    <name type="ordered locus">LOC_Os04g43910</name>
    <name type="ORF">OsJ_014843</name>
    <name type="ORF">OSJNBa0019D11.3</name>
    <name type="ORF">OSJNBb0061C13.15</name>
</gene>
<organism>
    <name type="scientific">Oryza sativa subsp. japonica</name>
    <name type="common">Rice</name>
    <dbReference type="NCBI Taxonomy" id="39947"/>
    <lineage>
        <taxon>Eukaryota</taxon>
        <taxon>Viridiplantae</taxon>
        <taxon>Streptophyta</taxon>
        <taxon>Embryophyta</taxon>
        <taxon>Tracheophyta</taxon>
        <taxon>Spermatophyta</taxon>
        <taxon>Magnoliopsida</taxon>
        <taxon>Liliopsida</taxon>
        <taxon>Poales</taxon>
        <taxon>Poaceae</taxon>
        <taxon>BOP clade</taxon>
        <taxon>Oryzoideae</taxon>
        <taxon>Oryzeae</taxon>
        <taxon>Oryzinae</taxon>
        <taxon>Oryza</taxon>
        <taxon>Oryza sativa</taxon>
    </lineage>
</organism>
<accession>Q7XKK6</accession>
<accession>A3AVM1</accession>
<accession>Q0JBP3</accession>
<accession>Q7XUA0</accession>
<name>ARFJ_ORYSJ</name>
<sequence length="699" mass="75737">MLTFMELAGPTEGDGGGSVDSQLWAACAGSMSSVPPVGAAVYYFPQGHAEQASAAVDLSSARVPPLVPCRVVAVRFMADAESDEVFAKIRLVPLRPGDAVVDVGEAAAAEARREEENSRPRPTSFAKTLTQSDANNGGGFSVPRFCAETIFPELDYSSEPPVQSVCAKDVHGVEWTFRHIYRGTPRRHLLTTGWSPFVNKKQLTAGDSIVFMRDEGGNIHVGLRRAKRGFCSIGGDDESLSSIPGWDQYRGLMRRNATATATGGRTPPKGKVPPENVLTAATRATTGQPFEVLYYPRASTPEFCVRAAAVRTAMAVQWCPGMRFKMAFETEDSSRISWFMGTVAGVQASDPVRWPQSPWRLLQVTWDEPELLQNVKRVCPWLVELVSSMPNLHLPSFSPPRKKPRNPPYAELPLEGQIFTGPVFPPNPMAHDHHHHHGFPFLPFPDSSAQPAGIQGARHAQFASPFPEFHIGNLQPNLMLYAGIRLPPADRAAPAPRPPRIIISTDLTIGSPGKPDDAACSPSSGGKKIDDTKPRGFLLFGQAILTEEQIKNGNSDGRPASPNWDAEKAPNTSEGSDSGVTQGSPTKNTTPSWSLPYFGGNNISRASEYELNPGQCKVFVESETVGRSLDLSALSSFEELYACLSDMFSIGSDELRSHLVYRSPAGEVKHAGDEPFCAFVKSARKLRILTDAGSDNLGD</sequence>
<feature type="chain" id="PRO_0000299265" description="Auxin response factor 10">
    <location>
        <begin position="1"/>
        <end position="699"/>
    </location>
</feature>
<feature type="domain" description="PB1" evidence="3">
    <location>
        <begin position="613"/>
        <end position="693"/>
    </location>
</feature>
<feature type="DNA-binding region" description="TF-B3" evidence="2">
    <location>
        <begin position="125"/>
        <end position="227"/>
    </location>
</feature>
<feature type="region of interest" description="Disordered" evidence="4">
    <location>
        <begin position="108"/>
        <end position="136"/>
    </location>
</feature>
<feature type="region of interest" description="Disordered" evidence="4">
    <location>
        <begin position="505"/>
        <end position="533"/>
    </location>
</feature>
<feature type="region of interest" description="Disordered" evidence="4">
    <location>
        <begin position="551"/>
        <end position="595"/>
    </location>
</feature>
<feature type="compositionally biased region" description="Basic and acidic residues" evidence="4">
    <location>
        <begin position="110"/>
        <end position="119"/>
    </location>
</feature>
<feature type="compositionally biased region" description="Polar residues" evidence="4">
    <location>
        <begin position="125"/>
        <end position="135"/>
    </location>
</feature>
<feature type="compositionally biased region" description="Polar residues" evidence="4">
    <location>
        <begin position="570"/>
        <end position="593"/>
    </location>
</feature>
<protein>
    <recommendedName>
        <fullName>Auxin response factor 10</fullName>
    </recommendedName>
</protein>
<dbReference type="EMBL" id="AL662958">
    <property type="protein sequence ID" value="CAD41455.1"/>
    <property type="status" value="ALT_INIT"/>
    <property type="molecule type" value="Genomic_DNA"/>
</dbReference>
<dbReference type="EMBL" id="AL731629">
    <property type="protein sequence ID" value="CAE05633.2"/>
    <property type="status" value="ALT_INIT"/>
    <property type="molecule type" value="Genomic_DNA"/>
</dbReference>
<dbReference type="EMBL" id="AP008210">
    <property type="protein sequence ID" value="BAF15244.1"/>
    <property type="status" value="ALT_SEQ"/>
    <property type="molecule type" value="Genomic_DNA"/>
</dbReference>
<dbReference type="EMBL" id="AP014960">
    <property type="status" value="NOT_ANNOTATED_CDS"/>
    <property type="molecule type" value="Genomic_DNA"/>
</dbReference>
<dbReference type="EMBL" id="CM000141">
    <property type="status" value="NOT_ANNOTATED_CDS"/>
    <property type="molecule type" value="Genomic_DNA"/>
</dbReference>
<dbReference type="RefSeq" id="XP_015633845.1">
    <property type="nucleotide sequence ID" value="XM_015778359.1"/>
</dbReference>
<dbReference type="SMR" id="Q7XKK6"/>
<dbReference type="FunCoup" id="Q7XKK6">
    <property type="interactions" value="3"/>
</dbReference>
<dbReference type="STRING" id="39947.Q7XKK6"/>
<dbReference type="PaxDb" id="39947-Q7XKK6"/>
<dbReference type="KEGG" id="dosa:Os04g0519700"/>
<dbReference type="eggNOG" id="ENOG502QTRP">
    <property type="taxonomic scope" value="Eukaryota"/>
</dbReference>
<dbReference type="HOGENOM" id="CLU_002626_3_0_1"/>
<dbReference type="InParanoid" id="Q7XKK6"/>
<dbReference type="OrthoDB" id="621520at2759"/>
<dbReference type="Proteomes" id="UP000000763">
    <property type="component" value="Chromosome 4"/>
</dbReference>
<dbReference type="Proteomes" id="UP000007752">
    <property type="component" value="Chromosome 4"/>
</dbReference>
<dbReference type="Proteomes" id="UP000059680">
    <property type="component" value="Chromosome 4"/>
</dbReference>
<dbReference type="GO" id="GO:0005634">
    <property type="term" value="C:nucleus"/>
    <property type="evidence" value="ECO:0007669"/>
    <property type="project" value="UniProtKB-SubCell"/>
</dbReference>
<dbReference type="GO" id="GO:0003677">
    <property type="term" value="F:DNA binding"/>
    <property type="evidence" value="ECO:0007669"/>
    <property type="project" value="UniProtKB-KW"/>
</dbReference>
<dbReference type="GO" id="GO:0009734">
    <property type="term" value="P:auxin-activated signaling pathway"/>
    <property type="evidence" value="ECO:0007669"/>
    <property type="project" value="UniProtKB-KW"/>
</dbReference>
<dbReference type="GO" id="GO:0006355">
    <property type="term" value="P:regulation of DNA-templated transcription"/>
    <property type="evidence" value="ECO:0007669"/>
    <property type="project" value="InterPro"/>
</dbReference>
<dbReference type="CDD" id="cd10017">
    <property type="entry name" value="B3_DNA"/>
    <property type="match status" value="1"/>
</dbReference>
<dbReference type="FunFam" id="2.30.30.1040:FF:000002">
    <property type="entry name" value="Auxin response factor"/>
    <property type="match status" value="1"/>
</dbReference>
<dbReference type="FunFam" id="2.40.330.10:FF:000001">
    <property type="entry name" value="Auxin response factor"/>
    <property type="match status" value="1"/>
</dbReference>
<dbReference type="Gene3D" id="2.30.30.1040">
    <property type="match status" value="1"/>
</dbReference>
<dbReference type="Gene3D" id="2.40.330.10">
    <property type="entry name" value="DNA-binding pseudobarrel domain"/>
    <property type="match status" value="1"/>
</dbReference>
<dbReference type="Gene3D" id="3.10.20.90">
    <property type="entry name" value="Phosphatidylinositol 3-kinase Catalytic Subunit, Chain A, domain 1"/>
    <property type="match status" value="1"/>
</dbReference>
<dbReference type="InterPro" id="IPR010525">
    <property type="entry name" value="ARF_dom"/>
</dbReference>
<dbReference type="InterPro" id="IPR044835">
    <property type="entry name" value="ARF_plant"/>
</dbReference>
<dbReference type="InterPro" id="IPR003340">
    <property type="entry name" value="B3_DNA-bd"/>
</dbReference>
<dbReference type="InterPro" id="IPR015300">
    <property type="entry name" value="DNA-bd_pseudobarrel_sf"/>
</dbReference>
<dbReference type="InterPro" id="IPR053793">
    <property type="entry name" value="PB1-like"/>
</dbReference>
<dbReference type="PANTHER" id="PTHR31384:SF86">
    <property type="entry name" value="AUXIN RESPONSE FACTOR 10"/>
    <property type="match status" value="1"/>
</dbReference>
<dbReference type="PANTHER" id="PTHR31384">
    <property type="entry name" value="AUXIN RESPONSE FACTOR 4-RELATED"/>
    <property type="match status" value="1"/>
</dbReference>
<dbReference type="Pfam" id="PF06507">
    <property type="entry name" value="ARF_AD"/>
    <property type="match status" value="1"/>
</dbReference>
<dbReference type="Pfam" id="PF02362">
    <property type="entry name" value="B3"/>
    <property type="match status" value="1"/>
</dbReference>
<dbReference type="SMART" id="SM01019">
    <property type="entry name" value="B3"/>
    <property type="match status" value="1"/>
</dbReference>
<dbReference type="SUPFAM" id="SSF101936">
    <property type="entry name" value="DNA-binding pseudobarrel domain"/>
    <property type="match status" value="1"/>
</dbReference>
<dbReference type="PROSITE" id="PS50863">
    <property type="entry name" value="B3"/>
    <property type="match status" value="1"/>
</dbReference>
<dbReference type="PROSITE" id="PS51745">
    <property type="entry name" value="PB1"/>
    <property type="match status" value="1"/>
</dbReference>
<proteinExistence type="evidence at transcript level"/>